<dbReference type="EC" id="2.1.1.14" evidence="1"/>
<dbReference type="EMBL" id="CP000826">
    <property type="protein sequence ID" value="ABV39352.1"/>
    <property type="molecule type" value="Genomic_DNA"/>
</dbReference>
<dbReference type="SMR" id="A8G8B2"/>
<dbReference type="STRING" id="399741.Spro_0242"/>
<dbReference type="KEGG" id="spe:Spro_0242"/>
<dbReference type="eggNOG" id="COG0620">
    <property type="taxonomic scope" value="Bacteria"/>
</dbReference>
<dbReference type="HOGENOM" id="CLU_013175_0_0_6"/>
<dbReference type="OrthoDB" id="244285at2"/>
<dbReference type="UniPathway" id="UPA00051">
    <property type="reaction ID" value="UER00082"/>
</dbReference>
<dbReference type="GO" id="GO:0003871">
    <property type="term" value="F:5-methyltetrahydropteroyltriglutamate-homocysteine S-methyltransferase activity"/>
    <property type="evidence" value="ECO:0007669"/>
    <property type="project" value="UniProtKB-UniRule"/>
</dbReference>
<dbReference type="GO" id="GO:0008270">
    <property type="term" value="F:zinc ion binding"/>
    <property type="evidence" value="ECO:0007669"/>
    <property type="project" value="InterPro"/>
</dbReference>
<dbReference type="GO" id="GO:0009086">
    <property type="term" value="P:methionine biosynthetic process"/>
    <property type="evidence" value="ECO:0007669"/>
    <property type="project" value="UniProtKB-UniRule"/>
</dbReference>
<dbReference type="GO" id="GO:0032259">
    <property type="term" value="P:methylation"/>
    <property type="evidence" value="ECO:0007669"/>
    <property type="project" value="UniProtKB-KW"/>
</dbReference>
<dbReference type="CDD" id="cd03311">
    <property type="entry name" value="CIMS_C_terminal_like"/>
    <property type="match status" value="1"/>
</dbReference>
<dbReference type="CDD" id="cd03312">
    <property type="entry name" value="CIMS_N_terminal_like"/>
    <property type="match status" value="1"/>
</dbReference>
<dbReference type="FunFam" id="3.20.20.210:FF:000002">
    <property type="entry name" value="5-methyltetrahydropteroyltriglutamate--homocysteine methyltransferase"/>
    <property type="match status" value="1"/>
</dbReference>
<dbReference type="Gene3D" id="3.20.20.210">
    <property type="match status" value="2"/>
</dbReference>
<dbReference type="HAMAP" id="MF_00172">
    <property type="entry name" value="Meth_synth"/>
    <property type="match status" value="1"/>
</dbReference>
<dbReference type="InterPro" id="IPR013215">
    <property type="entry name" value="Cbl-indep_Met_Synth_N"/>
</dbReference>
<dbReference type="InterPro" id="IPR006276">
    <property type="entry name" value="Cobalamin-indep_Met_synthase"/>
</dbReference>
<dbReference type="InterPro" id="IPR002629">
    <property type="entry name" value="Met_Synth_C/arc"/>
</dbReference>
<dbReference type="InterPro" id="IPR038071">
    <property type="entry name" value="UROD/MetE-like_sf"/>
</dbReference>
<dbReference type="NCBIfam" id="TIGR01371">
    <property type="entry name" value="met_syn_B12ind"/>
    <property type="match status" value="1"/>
</dbReference>
<dbReference type="NCBIfam" id="NF003556">
    <property type="entry name" value="PRK05222.1"/>
    <property type="match status" value="1"/>
</dbReference>
<dbReference type="PANTHER" id="PTHR30519">
    <property type="entry name" value="5-METHYLTETRAHYDROPTEROYLTRIGLUTAMATE--HOMOCYSTEINE METHYLTRANSFERASE"/>
    <property type="match status" value="1"/>
</dbReference>
<dbReference type="Pfam" id="PF08267">
    <property type="entry name" value="Meth_synt_1"/>
    <property type="match status" value="1"/>
</dbReference>
<dbReference type="Pfam" id="PF01717">
    <property type="entry name" value="Meth_synt_2"/>
    <property type="match status" value="1"/>
</dbReference>
<dbReference type="PIRSF" id="PIRSF000382">
    <property type="entry name" value="MeTrfase_B12_ind"/>
    <property type="match status" value="1"/>
</dbReference>
<dbReference type="SUPFAM" id="SSF51726">
    <property type="entry name" value="UROD/MetE-like"/>
    <property type="match status" value="2"/>
</dbReference>
<organism>
    <name type="scientific">Serratia proteamaculans (strain 568)</name>
    <dbReference type="NCBI Taxonomy" id="399741"/>
    <lineage>
        <taxon>Bacteria</taxon>
        <taxon>Pseudomonadati</taxon>
        <taxon>Pseudomonadota</taxon>
        <taxon>Gammaproteobacteria</taxon>
        <taxon>Enterobacterales</taxon>
        <taxon>Yersiniaceae</taxon>
        <taxon>Serratia</taxon>
    </lineage>
</organism>
<accession>A8G8B2</accession>
<evidence type="ECO:0000255" key="1">
    <source>
        <dbReference type="HAMAP-Rule" id="MF_00172"/>
    </source>
</evidence>
<comment type="function">
    <text evidence="1">Catalyzes the transfer of a methyl group from 5-methyltetrahydrofolate to homocysteine resulting in methionine formation.</text>
</comment>
<comment type="catalytic activity">
    <reaction evidence="1">
        <text>5-methyltetrahydropteroyltri-L-glutamate + L-homocysteine = tetrahydropteroyltri-L-glutamate + L-methionine</text>
        <dbReference type="Rhea" id="RHEA:21196"/>
        <dbReference type="ChEBI" id="CHEBI:57844"/>
        <dbReference type="ChEBI" id="CHEBI:58140"/>
        <dbReference type="ChEBI" id="CHEBI:58199"/>
        <dbReference type="ChEBI" id="CHEBI:58207"/>
        <dbReference type="EC" id="2.1.1.14"/>
    </reaction>
</comment>
<comment type="cofactor">
    <cofactor evidence="1">
        <name>Zn(2+)</name>
        <dbReference type="ChEBI" id="CHEBI:29105"/>
    </cofactor>
    <text evidence="1">Binds 1 zinc ion per subunit.</text>
</comment>
<comment type="pathway">
    <text evidence="1">Amino-acid biosynthesis; L-methionine biosynthesis via de novo pathway; L-methionine from L-homocysteine (MetE route): step 1/1.</text>
</comment>
<comment type="similarity">
    <text evidence="1">Belongs to the vitamin-B12 independent methionine synthase family.</text>
</comment>
<protein>
    <recommendedName>
        <fullName evidence="1">5-methyltetrahydropteroyltriglutamate--homocysteine methyltransferase</fullName>
        <ecNumber evidence="1">2.1.1.14</ecNumber>
    </recommendedName>
    <alternativeName>
        <fullName evidence="1">Cobalamin-independent methionine synthase</fullName>
    </alternativeName>
    <alternativeName>
        <fullName evidence="1">Methionine synthase, vitamin-B12 independent isozyme</fullName>
    </alternativeName>
</protein>
<reference key="1">
    <citation type="submission" date="2007-09" db="EMBL/GenBank/DDBJ databases">
        <title>Complete sequence of chromosome of Serratia proteamaculans 568.</title>
        <authorList>
            <consortium name="US DOE Joint Genome Institute"/>
            <person name="Copeland A."/>
            <person name="Lucas S."/>
            <person name="Lapidus A."/>
            <person name="Barry K."/>
            <person name="Glavina del Rio T."/>
            <person name="Dalin E."/>
            <person name="Tice H."/>
            <person name="Pitluck S."/>
            <person name="Chain P."/>
            <person name="Malfatti S."/>
            <person name="Shin M."/>
            <person name="Vergez L."/>
            <person name="Schmutz J."/>
            <person name="Larimer F."/>
            <person name="Land M."/>
            <person name="Hauser L."/>
            <person name="Kyrpides N."/>
            <person name="Kim E."/>
            <person name="Taghavi S."/>
            <person name="Newman L."/>
            <person name="Vangronsveld J."/>
            <person name="van der Lelie D."/>
            <person name="Richardson P."/>
        </authorList>
    </citation>
    <scope>NUCLEOTIDE SEQUENCE [LARGE SCALE GENOMIC DNA]</scope>
    <source>
        <strain>568</strain>
    </source>
</reference>
<keyword id="KW-0028">Amino-acid biosynthesis</keyword>
<keyword id="KW-0479">Metal-binding</keyword>
<keyword id="KW-0486">Methionine biosynthesis</keyword>
<keyword id="KW-0489">Methyltransferase</keyword>
<keyword id="KW-0677">Repeat</keyword>
<keyword id="KW-0808">Transferase</keyword>
<keyword id="KW-0862">Zinc</keyword>
<proteinExistence type="inferred from homology"/>
<sequence>MAILNHTLGFPRVGLRRELKKAQESYWAGNSTQEELLAVGRELRARHWQQQQQAGVDLVPVGDFAWYDHVLTTSLLLGNVPARHQNADGTIDLDTLFRLGRGRAPTGEPAAAAEMTKWFNTNYHYMVPEFHKGQQFKLGWSQLLDEVDEALALGHKIKPVLLGPVTYLWLGKVKGEPFDRLSLLNDILPVYQQVLAELAKRGVEWVQIDEPALVLELPQAWLNAFKPAYDALQGQVKLLLTTYFDSVGHNLDTLRELPVQGLHVDLVGGHDDIAVLNKALPKEWLLSLGVINGRNVWRADLSNWFERLQPLVGSRPLWIGTSCSLLHSPIDLSVETRLDEEVKSWFAFALQKCGELALLSAALNAPGAAKQAELDAYSAPIRARRQSSRVHNAQVGQRLAAITAQDSERQRPYAERAQAQRERFNLPAWPTTTIGSFPQTTEIRGLRLDFKQGRLDGNNYRTSISEHIKQAIVEQERLGLDVLVHGEAERNDMVEYFGENLDGFVFTQNGWVQSYGSRCVKPPVIIGDISRPEAITVEWAKYAQSLTDKPVKGMLTGPVTILCWSFPREDVTREVIAKQIALALRDEVEDLEKAGIGIIQIDEPALREGLPLRQSDWAAYLNWAVDAFKLNAAVAKDDTQIHTHMCYCEFNDIMDSIAALDADVITIETSRSDMDLLEAFKEFEYPNEIGPGVYDIHSPNVPSVEWIEALLRKAAQNIPAERLWVNPDCGLKTRGWPETRQSLANMVLAAQRLREQQA</sequence>
<gene>
    <name evidence="1" type="primary">metE</name>
    <name type="ordered locus">Spro_0242</name>
</gene>
<feature type="chain" id="PRO_1000058316" description="5-methyltetrahydropteroyltriglutamate--homocysteine methyltransferase">
    <location>
        <begin position="1"/>
        <end position="758"/>
    </location>
</feature>
<feature type="active site" description="Proton donor" evidence="1">
    <location>
        <position position="697"/>
    </location>
</feature>
<feature type="binding site" evidence="1">
    <location>
        <begin position="17"/>
        <end position="20"/>
    </location>
    <ligand>
        <name>5-methyltetrahydropteroyltri-L-glutamate</name>
        <dbReference type="ChEBI" id="CHEBI:58207"/>
    </ligand>
</feature>
<feature type="binding site" evidence="1">
    <location>
        <position position="117"/>
    </location>
    <ligand>
        <name>5-methyltetrahydropteroyltri-L-glutamate</name>
        <dbReference type="ChEBI" id="CHEBI:58207"/>
    </ligand>
</feature>
<feature type="binding site" evidence="1">
    <location>
        <begin position="434"/>
        <end position="436"/>
    </location>
    <ligand>
        <name>L-homocysteine</name>
        <dbReference type="ChEBI" id="CHEBI:58199"/>
    </ligand>
</feature>
<feature type="binding site" evidence="1">
    <location>
        <begin position="434"/>
        <end position="436"/>
    </location>
    <ligand>
        <name>L-methionine</name>
        <dbReference type="ChEBI" id="CHEBI:57844"/>
    </ligand>
</feature>
<feature type="binding site" evidence="1">
    <location>
        <position position="487"/>
    </location>
    <ligand>
        <name>L-homocysteine</name>
        <dbReference type="ChEBI" id="CHEBI:58199"/>
    </ligand>
</feature>
<feature type="binding site" evidence="1">
    <location>
        <position position="487"/>
    </location>
    <ligand>
        <name>L-methionine</name>
        <dbReference type="ChEBI" id="CHEBI:57844"/>
    </ligand>
</feature>
<feature type="binding site" evidence="1">
    <location>
        <begin position="518"/>
        <end position="519"/>
    </location>
    <ligand>
        <name>5-methyltetrahydropteroyltri-L-glutamate</name>
        <dbReference type="ChEBI" id="CHEBI:58207"/>
    </ligand>
</feature>
<feature type="binding site" evidence="1">
    <location>
        <position position="564"/>
    </location>
    <ligand>
        <name>5-methyltetrahydropteroyltri-L-glutamate</name>
        <dbReference type="ChEBI" id="CHEBI:58207"/>
    </ligand>
</feature>
<feature type="binding site" evidence="1">
    <location>
        <position position="602"/>
    </location>
    <ligand>
        <name>L-homocysteine</name>
        <dbReference type="ChEBI" id="CHEBI:58199"/>
    </ligand>
</feature>
<feature type="binding site" evidence="1">
    <location>
        <position position="602"/>
    </location>
    <ligand>
        <name>L-methionine</name>
        <dbReference type="ChEBI" id="CHEBI:57844"/>
    </ligand>
</feature>
<feature type="binding site" evidence="1">
    <location>
        <position position="608"/>
    </location>
    <ligand>
        <name>5-methyltetrahydropteroyltri-L-glutamate</name>
        <dbReference type="ChEBI" id="CHEBI:58207"/>
    </ligand>
</feature>
<feature type="binding site" evidence="1">
    <location>
        <position position="644"/>
    </location>
    <ligand>
        <name>Zn(2+)</name>
        <dbReference type="ChEBI" id="CHEBI:29105"/>
        <note>catalytic</note>
    </ligand>
</feature>
<feature type="binding site" evidence="1">
    <location>
        <position position="646"/>
    </location>
    <ligand>
        <name>Zn(2+)</name>
        <dbReference type="ChEBI" id="CHEBI:29105"/>
        <note>catalytic</note>
    </ligand>
</feature>
<feature type="binding site" evidence="1">
    <location>
        <position position="668"/>
    </location>
    <ligand>
        <name>Zn(2+)</name>
        <dbReference type="ChEBI" id="CHEBI:29105"/>
        <note>catalytic</note>
    </ligand>
</feature>
<feature type="binding site" evidence="1">
    <location>
        <position position="729"/>
    </location>
    <ligand>
        <name>Zn(2+)</name>
        <dbReference type="ChEBI" id="CHEBI:29105"/>
        <note>catalytic</note>
    </ligand>
</feature>
<name>METE_SERP5</name>